<gene>
    <name type="primary">rox3</name>
    <name type="synonym">med19</name>
    <name type="ORF">B11E5.120</name>
    <name type="ORF">NCU01475</name>
</gene>
<accession>Q6MW04</accession>
<accession>Q7RXV6</accession>
<sequence length="349" mass="38322">MSFHPQTPQSPSHFSPSSSDQSTSMSGSIVSTTTTLPTPAHSVNGSSLANDMSFTDIVMGENSPQKRKRTSDDVGDREQKKVHIEDRKLGIDDLHLDVGEKYLLCRSQHQPPRPHLSEDLFEMYGLADLAAEYARIKDGQKNALRKTYKGHIKKLGVQGHFDSVKTDEKDPERLEYLMGCPQEEWNAHFVRGKEITRGLSSDMKSKISRAVTMSRGAVPSTLWNNSVLGDIAASSMKAHLNQPPSARPTAPNTPLAYGGPAMQRVKPQTPGFQDNRPRRNIKKRGYGDSSFEGYGEGFEDDGGLETGYSTGEGDMASGLKRRKKAQPGTQSYAQARQQSSYGHHGVSGI</sequence>
<feature type="chain" id="PRO_0000304779" description="Mediator of RNA polymerase II transcription subunit 19">
    <location>
        <begin position="1"/>
        <end position="349"/>
    </location>
</feature>
<feature type="region of interest" description="Disordered" evidence="2">
    <location>
        <begin position="1"/>
        <end position="81"/>
    </location>
</feature>
<feature type="region of interest" description="Disordered" evidence="2">
    <location>
        <begin position="238"/>
        <end position="349"/>
    </location>
</feature>
<feature type="compositionally biased region" description="Low complexity" evidence="2">
    <location>
        <begin position="1"/>
        <end position="28"/>
    </location>
</feature>
<feature type="compositionally biased region" description="Polar residues" evidence="2">
    <location>
        <begin position="29"/>
        <end position="53"/>
    </location>
</feature>
<feature type="compositionally biased region" description="Basic and acidic residues" evidence="2">
    <location>
        <begin position="70"/>
        <end position="81"/>
    </location>
</feature>
<feature type="compositionally biased region" description="Low complexity" evidence="2">
    <location>
        <begin position="330"/>
        <end position="341"/>
    </location>
</feature>
<protein>
    <recommendedName>
        <fullName>Mediator of RNA polymerase II transcription subunit 19</fullName>
    </recommendedName>
    <alternativeName>
        <fullName>Mediator complex subunit 19</fullName>
    </alternativeName>
</protein>
<reference key="1">
    <citation type="journal article" date="2003" name="Nucleic Acids Res.">
        <title>What's in the genome of a filamentous fungus? Analysis of the Neurospora genome sequence.</title>
        <authorList>
            <person name="Mannhaupt G."/>
            <person name="Montrone C."/>
            <person name="Haase D."/>
            <person name="Mewes H.-W."/>
            <person name="Aign V."/>
            <person name="Hoheisel J.D."/>
            <person name="Fartmann B."/>
            <person name="Nyakatura G."/>
            <person name="Kempken F."/>
            <person name="Maier J."/>
            <person name="Schulte U."/>
        </authorList>
    </citation>
    <scope>NUCLEOTIDE SEQUENCE [LARGE SCALE GENOMIC DNA]</scope>
    <source>
        <strain>ATCC 24698 / 74-OR23-1A / CBS 708.71 / DSM 1257 / FGSC 987</strain>
    </source>
</reference>
<reference key="2">
    <citation type="journal article" date="2003" name="Nature">
        <title>The genome sequence of the filamentous fungus Neurospora crassa.</title>
        <authorList>
            <person name="Galagan J.E."/>
            <person name="Calvo S.E."/>
            <person name="Borkovich K.A."/>
            <person name="Selker E.U."/>
            <person name="Read N.D."/>
            <person name="Jaffe D.B."/>
            <person name="FitzHugh W."/>
            <person name="Ma L.-J."/>
            <person name="Smirnov S."/>
            <person name="Purcell S."/>
            <person name="Rehman B."/>
            <person name="Elkins T."/>
            <person name="Engels R."/>
            <person name="Wang S."/>
            <person name="Nielsen C.B."/>
            <person name="Butler J."/>
            <person name="Endrizzi M."/>
            <person name="Qui D."/>
            <person name="Ianakiev P."/>
            <person name="Bell-Pedersen D."/>
            <person name="Nelson M.A."/>
            <person name="Werner-Washburne M."/>
            <person name="Selitrennikoff C.P."/>
            <person name="Kinsey J.A."/>
            <person name="Braun E.L."/>
            <person name="Zelter A."/>
            <person name="Schulte U."/>
            <person name="Kothe G.O."/>
            <person name="Jedd G."/>
            <person name="Mewes H.-W."/>
            <person name="Staben C."/>
            <person name="Marcotte E."/>
            <person name="Greenberg D."/>
            <person name="Roy A."/>
            <person name="Foley K."/>
            <person name="Naylor J."/>
            <person name="Stange-Thomann N."/>
            <person name="Barrett R."/>
            <person name="Gnerre S."/>
            <person name="Kamal M."/>
            <person name="Kamvysselis M."/>
            <person name="Mauceli E.W."/>
            <person name="Bielke C."/>
            <person name="Rudd S."/>
            <person name="Frishman D."/>
            <person name="Krystofova S."/>
            <person name="Rasmussen C."/>
            <person name="Metzenberg R.L."/>
            <person name="Perkins D.D."/>
            <person name="Kroken S."/>
            <person name="Cogoni C."/>
            <person name="Macino G."/>
            <person name="Catcheside D.E.A."/>
            <person name="Li W."/>
            <person name="Pratt R.J."/>
            <person name="Osmani S.A."/>
            <person name="DeSouza C.P.C."/>
            <person name="Glass N.L."/>
            <person name="Orbach M.J."/>
            <person name="Berglund J.A."/>
            <person name="Voelker R."/>
            <person name="Yarden O."/>
            <person name="Plamann M."/>
            <person name="Seiler S."/>
            <person name="Dunlap J.C."/>
            <person name="Radford A."/>
            <person name="Aramayo R."/>
            <person name="Natvig D.O."/>
            <person name="Alex L.A."/>
            <person name="Mannhaupt G."/>
            <person name="Ebbole D.J."/>
            <person name="Freitag M."/>
            <person name="Paulsen I."/>
            <person name="Sachs M.S."/>
            <person name="Lander E.S."/>
            <person name="Nusbaum C."/>
            <person name="Birren B.W."/>
        </authorList>
    </citation>
    <scope>NUCLEOTIDE SEQUENCE [LARGE SCALE GENOMIC DNA]</scope>
    <source>
        <strain>ATCC 24698 / 74-OR23-1A / CBS 708.71 / DSM 1257 / FGSC 987</strain>
    </source>
</reference>
<dbReference type="EMBL" id="BX842620">
    <property type="protein sequence ID" value="CAE76147.1"/>
    <property type="status" value="ALT_SEQ"/>
    <property type="molecule type" value="Genomic_DNA"/>
</dbReference>
<dbReference type="EMBL" id="CM002240">
    <property type="protein sequence ID" value="EAA27516.3"/>
    <property type="status" value="ALT_SEQ"/>
    <property type="molecule type" value="Genomic_DNA"/>
</dbReference>
<dbReference type="RefSeq" id="XP_956752.3">
    <property type="nucleotide sequence ID" value="XM_951659.3"/>
</dbReference>
<dbReference type="STRING" id="367110.Q6MW04"/>
<dbReference type="EnsemblFungi" id="EAA27516">
    <property type="protein sequence ID" value="EAA27516"/>
    <property type="gene ID" value="NCU01475"/>
</dbReference>
<dbReference type="GeneID" id="3872900"/>
<dbReference type="KEGG" id="ncr:NCU01475"/>
<dbReference type="HOGENOM" id="CLU_037869_0_0_1"/>
<dbReference type="InParanoid" id="Q6MW04"/>
<dbReference type="OrthoDB" id="2160599at2759"/>
<dbReference type="Proteomes" id="UP000001805">
    <property type="component" value="Chromosome 2, Linkage Group V"/>
</dbReference>
<dbReference type="GO" id="GO:0016592">
    <property type="term" value="C:mediator complex"/>
    <property type="evidence" value="ECO:0007669"/>
    <property type="project" value="InterPro"/>
</dbReference>
<dbReference type="GO" id="GO:0003712">
    <property type="term" value="F:transcription coregulator activity"/>
    <property type="evidence" value="ECO:0007669"/>
    <property type="project" value="InterPro"/>
</dbReference>
<dbReference type="GO" id="GO:0006357">
    <property type="term" value="P:regulation of transcription by RNA polymerase II"/>
    <property type="evidence" value="ECO:0007669"/>
    <property type="project" value="InterPro"/>
</dbReference>
<dbReference type="InterPro" id="IPR013942">
    <property type="entry name" value="Mediator_Med19_fun"/>
</dbReference>
<dbReference type="Pfam" id="PF08633">
    <property type="entry name" value="Rox3"/>
    <property type="match status" value="1"/>
</dbReference>
<evidence type="ECO:0000250" key="1"/>
<evidence type="ECO:0000256" key="2">
    <source>
        <dbReference type="SAM" id="MobiDB-lite"/>
    </source>
</evidence>
<evidence type="ECO:0000305" key="3"/>
<name>MED19_NEUCR</name>
<comment type="function">
    <text evidence="1">Component of the Mediator complex, a coactivator involved in the regulated transcription of nearly all RNA polymerase II-dependent genes. Mediator functions as a bridge to convey information from gene-specific regulatory proteins to the basal RNA polymerase II transcription machinery. Mediator is recruited to promoters by direct interactions with regulatory proteins and serves as a scaffold for the assembly of a functional preinitiation complex with RNA polymerase II and the general transcription factors (By similarity).</text>
</comment>
<comment type="subunit">
    <text evidence="1">Component of the Mediator complex.</text>
</comment>
<comment type="subcellular location">
    <subcellularLocation>
        <location evidence="1">Nucleus</location>
    </subcellularLocation>
</comment>
<comment type="similarity">
    <text evidence="3">Belongs to the Mediator complex subunit 19 family.</text>
</comment>
<comment type="sequence caution" evidence="3">
    <conflict type="erroneous gene model prediction">
        <sequence resource="EMBL-CDS" id="CAE76147"/>
    </conflict>
</comment>
<comment type="sequence caution" evidence="3">
    <conflict type="erroneous gene model prediction">
        <sequence resource="EMBL-CDS" id="EAA27516"/>
    </conflict>
</comment>
<proteinExistence type="inferred from homology"/>
<organism>
    <name type="scientific">Neurospora crassa (strain ATCC 24698 / 74-OR23-1A / CBS 708.71 / DSM 1257 / FGSC 987)</name>
    <dbReference type="NCBI Taxonomy" id="367110"/>
    <lineage>
        <taxon>Eukaryota</taxon>
        <taxon>Fungi</taxon>
        <taxon>Dikarya</taxon>
        <taxon>Ascomycota</taxon>
        <taxon>Pezizomycotina</taxon>
        <taxon>Sordariomycetes</taxon>
        <taxon>Sordariomycetidae</taxon>
        <taxon>Sordariales</taxon>
        <taxon>Sordariaceae</taxon>
        <taxon>Neurospora</taxon>
    </lineage>
</organism>
<keyword id="KW-0010">Activator</keyword>
<keyword id="KW-0539">Nucleus</keyword>
<keyword id="KW-1185">Reference proteome</keyword>
<keyword id="KW-0804">Transcription</keyword>
<keyword id="KW-0805">Transcription regulation</keyword>